<evidence type="ECO:0000250" key="1">
    <source>
        <dbReference type="UniProtKB" id="P07953"/>
    </source>
</evidence>
<evidence type="ECO:0000250" key="2">
    <source>
        <dbReference type="UniProtKB" id="Q16875"/>
    </source>
</evidence>
<evidence type="ECO:0000255" key="3"/>
<evidence type="ECO:0000256" key="4">
    <source>
        <dbReference type="SAM" id="MobiDB-lite"/>
    </source>
</evidence>
<evidence type="ECO:0000269" key="5">
    <source>
    </source>
</evidence>
<evidence type="ECO:0000305" key="6"/>
<evidence type="ECO:0000305" key="7">
    <source>
    </source>
</evidence>
<reference key="1">
    <citation type="journal article" date="1995" name="Biochem. Biophys. Res. Commun.">
        <title>Cloning and expression of a catalytic core bovine brain 6-phosphofructo-2-kinase/fructose-2,6-bisphosphatase.</title>
        <authorList>
            <person name="Ventura F."/>
            <person name="Ambrosio S."/>
            <person name="Bartrons R."/>
            <person name="El-Maghrabi M.R."/>
            <person name="Lange A.J."/>
            <person name="Pilkis S.J."/>
        </authorList>
    </citation>
    <scope>NUCLEOTIDE SEQUENCE [MRNA]</scope>
    <scope>FUNCTION</scope>
    <scope>CATALYTIC ACTIVITY</scope>
    <scope>TISSUE SPECIFICITY</scope>
    <source>
        <tissue>Brain</tissue>
    </source>
</reference>
<protein>
    <recommendedName>
        <fullName>6-phosphofructo-2-kinase/fructose-2,6-bisphosphatase 3</fullName>
        <shortName>6PF-2-K/Fru-2,6-P2ase 3</shortName>
        <shortName>PFK/FBPase 3</shortName>
    </recommendedName>
    <alternativeName>
        <fullName>6PF-2-K/Fru-2,6-P2ase brain/placenta-type isozyme</fullName>
    </alternativeName>
    <domain>
        <recommendedName>
            <fullName>6-phosphofructo-2-kinase</fullName>
            <ecNumber evidence="5">2.7.1.105</ecNumber>
        </recommendedName>
    </domain>
    <domain>
        <recommendedName>
            <fullName>Fructose-2,6-bisphosphatase</fullName>
            <ecNumber evidence="5">3.1.3.46</ecNumber>
        </recommendedName>
    </domain>
</protein>
<feature type="chain" id="PRO_0000179967" description="6-phosphofructo-2-kinase/fructose-2,6-bisphosphatase 3">
    <location>
        <begin position="1"/>
        <end position="463" status="greater than"/>
    </location>
</feature>
<feature type="region of interest" description="6-phosphofructo-2-kinase">
    <location>
        <begin position="1"/>
        <end position="246"/>
    </location>
</feature>
<feature type="region of interest" description="Fructose-2,6-bisphosphatase">
    <location>
        <begin position="247"/>
        <end position="463" status="greater than"/>
    </location>
</feature>
<feature type="region of interest" description="Disordered" evidence="4">
    <location>
        <begin position="444"/>
        <end position="463"/>
    </location>
</feature>
<feature type="active site" evidence="3">
    <location>
        <position position="125"/>
    </location>
</feature>
<feature type="active site" evidence="3">
    <location>
        <position position="155"/>
    </location>
</feature>
<feature type="active site" description="Tele-phosphohistidine intermediate" evidence="2">
    <location>
        <position position="255"/>
    </location>
</feature>
<feature type="active site" description="Proton donor/acceptor" evidence="2">
    <location>
        <position position="324"/>
    </location>
</feature>
<feature type="binding site" evidence="2">
    <location>
        <begin position="42"/>
        <end position="50"/>
    </location>
    <ligand>
        <name>ATP</name>
        <dbReference type="ChEBI" id="CHEBI:30616"/>
    </ligand>
</feature>
<feature type="binding site" evidence="2">
    <location>
        <position position="75"/>
    </location>
    <ligand>
        <name>beta-D-fructose 6-phosphate</name>
        <dbReference type="ChEBI" id="CHEBI:57634"/>
    </ligand>
</feature>
<feature type="binding site" evidence="2">
    <location>
        <position position="99"/>
    </location>
    <ligand>
        <name>beta-D-fructose 6-phosphate</name>
        <dbReference type="ChEBI" id="CHEBI:57634"/>
    </ligand>
</feature>
<feature type="binding site" evidence="2">
    <location>
        <position position="127"/>
    </location>
    <ligand>
        <name>beta-D-fructose 6-phosphate</name>
        <dbReference type="ChEBI" id="CHEBI:57634"/>
    </ligand>
</feature>
<feature type="binding site" evidence="2">
    <location>
        <position position="133"/>
    </location>
    <ligand>
        <name>beta-D-fructose 6-phosphate</name>
        <dbReference type="ChEBI" id="CHEBI:57634"/>
    </ligand>
</feature>
<feature type="binding site" evidence="2">
    <location>
        <begin position="164"/>
        <end position="169"/>
    </location>
    <ligand>
        <name>ATP</name>
        <dbReference type="ChEBI" id="CHEBI:30616"/>
    </ligand>
</feature>
<feature type="binding site" evidence="2">
    <location>
        <position position="169"/>
    </location>
    <ligand>
        <name>beta-D-fructose 6-phosphate</name>
        <dbReference type="ChEBI" id="CHEBI:57634"/>
    </ligand>
</feature>
<feature type="binding site" evidence="2">
    <location>
        <position position="191"/>
    </location>
    <ligand>
        <name>beta-D-fructose 6-phosphate</name>
        <dbReference type="ChEBI" id="CHEBI:57634"/>
    </ligand>
</feature>
<feature type="binding site" evidence="2">
    <location>
        <position position="195"/>
    </location>
    <ligand>
        <name>beta-D-fructose 6-phosphate</name>
        <dbReference type="ChEBI" id="CHEBI:57634"/>
    </ligand>
</feature>
<feature type="binding site" evidence="2">
    <location>
        <position position="254"/>
    </location>
    <ligand>
        <name>beta-D-fructose 2,6-bisphosphate</name>
        <dbReference type="ChEBI" id="CHEBI:58579"/>
    </ligand>
</feature>
<feature type="binding site" evidence="2">
    <location>
        <position position="261"/>
    </location>
    <ligand>
        <name>beta-D-fructose 2,6-bisphosphate</name>
        <dbReference type="ChEBI" id="CHEBI:58579"/>
    </ligand>
</feature>
<feature type="binding site" evidence="2">
    <location>
        <position position="267"/>
    </location>
    <ligand>
        <name>beta-D-fructose 2,6-bisphosphate</name>
        <dbReference type="ChEBI" id="CHEBI:58579"/>
    </ligand>
</feature>
<feature type="binding site" evidence="2">
    <location>
        <position position="335"/>
    </location>
    <ligand>
        <name>beta-D-fructose 2,6-bisphosphate</name>
        <dbReference type="ChEBI" id="CHEBI:58579"/>
    </ligand>
</feature>
<feature type="binding site" evidence="1">
    <location>
        <begin position="346"/>
        <end position="349"/>
    </location>
    <ligand>
        <name>ATP</name>
        <dbReference type="ChEBI" id="CHEBI:30616"/>
    </ligand>
</feature>
<feature type="binding site" evidence="2">
    <location>
        <position position="353"/>
    </location>
    <ligand>
        <name>beta-D-fructose 2,6-bisphosphate</name>
        <dbReference type="ChEBI" id="CHEBI:58579"/>
    </ligand>
</feature>
<feature type="binding site" evidence="2">
    <location>
        <position position="364"/>
    </location>
    <ligand>
        <name>beta-D-fructose 2,6-bisphosphate</name>
        <dbReference type="ChEBI" id="CHEBI:58579"/>
    </ligand>
</feature>
<feature type="binding site" evidence="1">
    <location>
        <begin position="390"/>
        <end position="394"/>
    </location>
    <ligand>
        <name>ATP</name>
        <dbReference type="ChEBI" id="CHEBI:30616"/>
    </ligand>
</feature>
<feature type="binding site" evidence="2">
    <location>
        <position position="390"/>
    </location>
    <ligand>
        <name>beta-D-fructose 2,6-bisphosphate</name>
        <dbReference type="ChEBI" id="CHEBI:58579"/>
    </ligand>
</feature>
<feature type="binding site" evidence="2">
    <location>
        <position position="426"/>
    </location>
    <ligand>
        <name>ATP</name>
        <dbReference type="ChEBI" id="CHEBI:30616"/>
    </ligand>
</feature>
<feature type="site" description="Transition state stabilizer" evidence="2">
    <location>
        <position position="254"/>
    </location>
</feature>
<feature type="site" description="Transition state stabilizer" evidence="2">
    <location>
        <position position="261"/>
    </location>
</feature>
<feature type="site" description="Transition state stabilizer" evidence="2">
    <location>
        <position position="389"/>
    </location>
</feature>
<feature type="modified residue" description="Phosphoserine; by AMPK and PKA" evidence="2">
    <location>
        <position position="462"/>
    </location>
</feature>
<feature type="non-terminal residue">
    <location>
        <position position="463"/>
    </location>
</feature>
<accession>Q28901</accession>
<comment type="function">
    <text evidence="5">Catalyzes both the synthesis and degradation of fructose 2,6-bisphosphate.</text>
</comment>
<comment type="catalytic activity">
    <reaction evidence="5">
        <text>beta-D-fructose 2,6-bisphosphate + H2O = beta-D-fructose 6-phosphate + phosphate</text>
        <dbReference type="Rhea" id="RHEA:17289"/>
        <dbReference type="ChEBI" id="CHEBI:15377"/>
        <dbReference type="ChEBI" id="CHEBI:43474"/>
        <dbReference type="ChEBI" id="CHEBI:57634"/>
        <dbReference type="ChEBI" id="CHEBI:58579"/>
        <dbReference type="EC" id="3.1.3.46"/>
    </reaction>
    <physiologicalReaction direction="left-to-right" evidence="7">
        <dbReference type="Rhea" id="RHEA:17290"/>
    </physiologicalReaction>
</comment>
<comment type="catalytic activity">
    <reaction evidence="5">
        <text>beta-D-fructose 6-phosphate + ATP = beta-D-fructose 2,6-bisphosphate + ADP + H(+)</text>
        <dbReference type="Rhea" id="RHEA:15653"/>
        <dbReference type="ChEBI" id="CHEBI:15378"/>
        <dbReference type="ChEBI" id="CHEBI:30616"/>
        <dbReference type="ChEBI" id="CHEBI:57634"/>
        <dbReference type="ChEBI" id="CHEBI:58579"/>
        <dbReference type="ChEBI" id="CHEBI:456216"/>
        <dbReference type="EC" id="2.7.1.105"/>
    </reaction>
    <physiologicalReaction direction="left-to-right" evidence="7">
        <dbReference type="Rhea" id="RHEA:15654"/>
    </physiologicalReaction>
</comment>
<comment type="subunit">
    <text evidence="2">Homodimer. Forms a heterodimer with PFKFB2 (By similarity).</text>
</comment>
<comment type="tissue specificity">
    <text evidence="5">Brain.</text>
</comment>
<comment type="PTM">
    <text evidence="2">Phosphorylation by AMPK stimulates activity.</text>
</comment>
<comment type="similarity">
    <text evidence="6">In the C-terminal section; belongs to the phosphoglycerate mutase family.</text>
</comment>
<comment type="sequence caution" evidence="6">
    <conflict type="erroneous initiation">
        <sequence resource="EMBL-CDS" id="AAB34145"/>
    </conflict>
</comment>
<organism>
    <name type="scientific">Bos taurus</name>
    <name type="common">Bovine</name>
    <dbReference type="NCBI Taxonomy" id="9913"/>
    <lineage>
        <taxon>Eukaryota</taxon>
        <taxon>Metazoa</taxon>
        <taxon>Chordata</taxon>
        <taxon>Craniata</taxon>
        <taxon>Vertebrata</taxon>
        <taxon>Euteleostomi</taxon>
        <taxon>Mammalia</taxon>
        <taxon>Eutheria</taxon>
        <taxon>Laurasiatheria</taxon>
        <taxon>Artiodactyla</taxon>
        <taxon>Ruminantia</taxon>
        <taxon>Pecora</taxon>
        <taxon>Bovidae</taxon>
        <taxon>Bovinae</taxon>
        <taxon>Bos</taxon>
    </lineage>
</organism>
<gene>
    <name type="primary">PFKFB3</name>
</gene>
<sequence length="463" mass="53584">MPLELTQSRVQKIWIPVDHRPSLPRTCGPKLTNSPTVIVMVGLPARGKTYISKKLTRYLNWIGVPTKVFNLGEYRRDGVKQYSSYNFFRPDNEEAMKVRKQCALAALRDVKSYLTKEGGQIAVFDATNTTRERRHMILHFPKENDFKVFFIESVCDDPTVVASNIMEVKISSPDYKDCNSRENAMDDFMKRINCYEASYQPLDPDNDDRDLSLIKVIDVGQRFLVNRVQDHIQRRIVYYLMNIHWQPRTIYLCRHGESKHNLQGKIGGDSGLSSRGRKFANALSKFVEEQNLKDLKVWTSQLKSTIQTAEALQLPYEQWKALNEIDAGVCEEMTYEEIKDTYPEEYALAEADKYYYRYPTGESYQDLVQRLEPVIMELERQENVLVICHQAVCVCLLAYFLDKSAEEMPYLKCPLHAVLKLTPIAYGCRVESIYLNVESVSTHRERSEDAKKGPNPLMRSNSH</sequence>
<dbReference type="EC" id="2.7.1.105" evidence="5"/>
<dbReference type="EC" id="3.1.3.46" evidence="5"/>
<dbReference type="EMBL" id="S77845">
    <property type="protein sequence ID" value="AAB34145.2"/>
    <property type="status" value="ALT_INIT"/>
    <property type="molecule type" value="mRNA"/>
</dbReference>
<dbReference type="SMR" id="Q28901"/>
<dbReference type="FunCoup" id="Q28901">
    <property type="interactions" value="822"/>
</dbReference>
<dbReference type="STRING" id="9913.ENSBTAP00000066721"/>
<dbReference type="PaxDb" id="9913-ENSBTAP00000048148"/>
<dbReference type="eggNOG" id="KOG0234">
    <property type="taxonomic scope" value="Eukaryota"/>
</dbReference>
<dbReference type="InParanoid" id="Q28901"/>
<dbReference type="OrthoDB" id="267323at2759"/>
<dbReference type="BRENDA" id="3.1.3.46">
    <property type="organism ID" value="908"/>
</dbReference>
<dbReference type="Proteomes" id="UP000009136">
    <property type="component" value="Unplaced"/>
</dbReference>
<dbReference type="GO" id="GO:0005829">
    <property type="term" value="C:cytosol"/>
    <property type="evidence" value="ECO:0000318"/>
    <property type="project" value="GO_Central"/>
</dbReference>
<dbReference type="GO" id="GO:0003873">
    <property type="term" value="F:6-phosphofructo-2-kinase activity"/>
    <property type="evidence" value="ECO:0000314"/>
    <property type="project" value="UniProtKB"/>
</dbReference>
<dbReference type="GO" id="GO:0005524">
    <property type="term" value="F:ATP binding"/>
    <property type="evidence" value="ECO:0007669"/>
    <property type="project" value="UniProtKB-KW"/>
</dbReference>
<dbReference type="GO" id="GO:0004331">
    <property type="term" value="F:fructose-2,6-bisphosphate 2-phosphatase activity"/>
    <property type="evidence" value="ECO:0000314"/>
    <property type="project" value="UniProtKB"/>
</dbReference>
<dbReference type="GO" id="GO:0006003">
    <property type="term" value="P:fructose 2,6-bisphosphate metabolic process"/>
    <property type="evidence" value="ECO:0000318"/>
    <property type="project" value="GO_Central"/>
</dbReference>
<dbReference type="GO" id="GO:0006000">
    <property type="term" value="P:fructose metabolic process"/>
    <property type="evidence" value="ECO:0007669"/>
    <property type="project" value="InterPro"/>
</dbReference>
<dbReference type="CDD" id="cd07067">
    <property type="entry name" value="HP_PGM_like"/>
    <property type="match status" value="1"/>
</dbReference>
<dbReference type="FunFam" id="3.40.50.1240:FF:000001">
    <property type="entry name" value="6-phosphofructo-2-kinase/fructose-2, 6-bisphosphatase 3 isoform 2"/>
    <property type="match status" value="1"/>
</dbReference>
<dbReference type="FunFam" id="3.40.50.300:FF:000047">
    <property type="entry name" value="6-phosphofructo-2-kinase/fructose-2, 6-bisphosphatase 3 isoform 2"/>
    <property type="match status" value="1"/>
</dbReference>
<dbReference type="Gene3D" id="3.40.50.300">
    <property type="entry name" value="P-loop containing nucleotide triphosphate hydrolases"/>
    <property type="match status" value="1"/>
</dbReference>
<dbReference type="Gene3D" id="3.40.50.1240">
    <property type="entry name" value="Phosphoglycerate mutase-like"/>
    <property type="match status" value="1"/>
</dbReference>
<dbReference type="InterPro" id="IPR003094">
    <property type="entry name" value="6Pfruct_kin"/>
</dbReference>
<dbReference type="InterPro" id="IPR013079">
    <property type="entry name" value="6Phosfructo_kin"/>
</dbReference>
<dbReference type="InterPro" id="IPR013078">
    <property type="entry name" value="His_Pase_superF_clade-1"/>
</dbReference>
<dbReference type="InterPro" id="IPR029033">
    <property type="entry name" value="His_PPase_superfam"/>
</dbReference>
<dbReference type="InterPro" id="IPR027417">
    <property type="entry name" value="P-loop_NTPase"/>
</dbReference>
<dbReference type="InterPro" id="IPR001345">
    <property type="entry name" value="PG/BPGM_mutase_AS"/>
</dbReference>
<dbReference type="PANTHER" id="PTHR10606">
    <property type="entry name" value="6-PHOSPHOFRUCTO-2-KINASE/FRUCTOSE-2,6-BISPHOSPHATASE"/>
    <property type="match status" value="1"/>
</dbReference>
<dbReference type="PANTHER" id="PTHR10606:SF41">
    <property type="entry name" value="6-PHOSPHOFRUCTO-2-KINASE_FRUCTOSE-2,6-BISPHOSPHATASE 3"/>
    <property type="match status" value="1"/>
</dbReference>
<dbReference type="Pfam" id="PF01591">
    <property type="entry name" value="6PF2K"/>
    <property type="match status" value="1"/>
</dbReference>
<dbReference type="Pfam" id="PF00300">
    <property type="entry name" value="His_Phos_1"/>
    <property type="match status" value="1"/>
</dbReference>
<dbReference type="PIRSF" id="PIRSF000709">
    <property type="entry name" value="6PFK_2-Ptase"/>
    <property type="match status" value="1"/>
</dbReference>
<dbReference type="PRINTS" id="PR00991">
    <property type="entry name" value="6PFRUCTKNASE"/>
</dbReference>
<dbReference type="SMART" id="SM00855">
    <property type="entry name" value="PGAM"/>
    <property type="match status" value="1"/>
</dbReference>
<dbReference type="SUPFAM" id="SSF52540">
    <property type="entry name" value="P-loop containing nucleoside triphosphate hydrolases"/>
    <property type="match status" value="1"/>
</dbReference>
<dbReference type="SUPFAM" id="SSF53254">
    <property type="entry name" value="Phosphoglycerate mutase-like"/>
    <property type="match status" value="1"/>
</dbReference>
<dbReference type="PROSITE" id="PS00175">
    <property type="entry name" value="PG_MUTASE"/>
    <property type="match status" value="1"/>
</dbReference>
<proteinExistence type="evidence at protein level"/>
<name>F263_BOVIN</name>
<keyword id="KW-0067">ATP-binding</keyword>
<keyword id="KW-0378">Hydrolase</keyword>
<keyword id="KW-0418">Kinase</keyword>
<keyword id="KW-0511">Multifunctional enzyme</keyword>
<keyword id="KW-0547">Nucleotide-binding</keyword>
<keyword id="KW-0597">Phosphoprotein</keyword>
<keyword id="KW-1185">Reference proteome</keyword>
<keyword id="KW-0808">Transferase</keyword>